<proteinExistence type="evidence at transcript level"/>
<name>STA5A_PIG</name>
<comment type="function">
    <text evidence="1">Carries out a dual function: signal transduction and activation of transcription. Mediates cellular responses to the cytokine KITLG/SCF and other growth factors. May mediate cellular responses to activated FGFR1, FGFR2, FGFR3 and FGFR4. Binds to the GAS element and activates PRL-induced transcription. Regulates the expression of milk proteins during lactation (By similarity).</text>
</comment>
<comment type="subunit">
    <text evidence="1 3">Forms a homodimer or a heterodimer with a related family member. Binds NR3C1. Interacts with NCOA1 and SOCS7. Interacts with ERBB4 (By similarity). Interacts with EBF4. Interacts with CD69 (By similarity).</text>
</comment>
<comment type="subcellular location">
    <subcellularLocation>
        <location evidence="1">Cytoplasm</location>
    </subcellularLocation>
    <subcellularLocation>
        <location evidence="1">Nucleus</location>
    </subcellularLocation>
    <text evidence="1">Translocated into the nucleus in response to phosphorylation.</text>
</comment>
<comment type="PTM">
    <text evidence="4">ISGylated.</text>
</comment>
<comment type="PTM">
    <text evidence="2 3 4 6">Tyrosine phosphorylated in response to KITLG/SCF, IL2, IL3, IL7, IL15, CSF2/GMCSF, GH1, PRL, EPO and THPO (By similarity). Activated KIT promotes phosphorylation on tyrosine residues and subsequent translocation to the nucleus (By similarity). Tyrosine phosphorylated in response to constitutively activated FGFR1, FGFR2, FGFR3 and FGFR4 (By similarity). Tyrosine phosphorylation is required for DNA-binding activity and dimerization. Serine phosphorylation is also required for maximal transcriptional activity (By similarity). Tyrosine phosphorylated in response to signaling via activated FLT3; wild-type FLT3 results in much weaker phosphorylation than constitutively activated mutant FLT3. Alternatively, can be phosphorylated by JAK2 at Tyr-699 (By similarity).</text>
</comment>
<comment type="similarity">
    <text evidence="9">Belongs to the transcription factor STAT family.</text>
</comment>
<dbReference type="EMBL" id="AF135122">
    <property type="protein sequence ID" value="AAD46163.1"/>
    <property type="molecule type" value="mRNA"/>
</dbReference>
<dbReference type="RefSeq" id="NP_999455.1">
    <property type="nucleotide sequence ID" value="NM_214290.1"/>
</dbReference>
<dbReference type="SMR" id="Q9TUZ1"/>
<dbReference type="FunCoup" id="Q9TUZ1">
    <property type="interactions" value="510"/>
</dbReference>
<dbReference type="STRING" id="9823.ENSSSCP00000018442"/>
<dbReference type="PeptideAtlas" id="Q9TUZ1"/>
<dbReference type="GeneID" id="397550"/>
<dbReference type="KEGG" id="ssc:397550"/>
<dbReference type="CTD" id="6776"/>
<dbReference type="InParanoid" id="Q9TUZ1"/>
<dbReference type="OrthoDB" id="19300at2759"/>
<dbReference type="Proteomes" id="UP000008227">
    <property type="component" value="Unplaced"/>
</dbReference>
<dbReference type="Proteomes" id="UP000314985">
    <property type="component" value="Unplaced"/>
</dbReference>
<dbReference type="Proteomes" id="UP000694570">
    <property type="component" value="Unplaced"/>
</dbReference>
<dbReference type="Proteomes" id="UP000694571">
    <property type="component" value="Unplaced"/>
</dbReference>
<dbReference type="Proteomes" id="UP000694720">
    <property type="component" value="Unplaced"/>
</dbReference>
<dbReference type="Proteomes" id="UP000694722">
    <property type="component" value="Unplaced"/>
</dbReference>
<dbReference type="Proteomes" id="UP000694723">
    <property type="component" value="Unplaced"/>
</dbReference>
<dbReference type="Proteomes" id="UP000694724">
    <property type="component" value="Unplaced"/>
</dbReference>
<dbReference type="Proteomes" id="UP000694725">
    <property type="component" value="Unplaced"/>
</dbReference>
<dbReference type="Proteomes" id="UP000694726">
    <property type="component" value="Unplaced"/>
</dbReference>
<dbReference type="Proteomes" id="UP000694727">
    <property type="component" value="Unplaced"/>
</dbReference>
<dbReference type="Proteomes" id="UP000694728">
    <property type="component" value="Unplaced"/>
</dbReference>
<dbReference type="GO" id="GO:0005737">
    <property type="term" value="C:cytoplasm"/>
    <property type="evidence" value="ECO:0000250"/>
    <property type="project" value="AgBase"/>
</dbReference>
<dbReference type="GO" id="GO:0005829">
    <property type="term" value="C:cytosol"/>
    <property type="evidence" value="ECO:0007669"/>
    <property type="project" value="UniProtKB-ARBA"/>
</dbReference>
<dbReference type="GO" id="GO:0005634">
    <property type="term" value="C:nucleus"/>
    <property type="evidence" value="ECO:0000250"/>
    <property type="project" value="AgBase"/>
</dbReference>
<dbReference type="GO" id="GO:0090575">
    <property type="term" value="C:RNA polymerase II transcription regulator complex"/>
    <property type="evidence" value="ECO:0000318"/>
    <property type="project" value="GO_Central"/>
</dbReference>
<dbReference type="GO" id="GO:0003677">
    <property type="term" value="F:DNA binding"/>
    <property type="evidence" value="ECO:0000250"/>
    <property type="project" value="AgBase"/>
</dbReference>
<dbReference type="GO" id="GO:0000981">
    <property type="term" value="F:DNA-binding transcription factor activity, RNA polymerase II-specific"/>
    <property type="evidence" value="ECO:0000318"/>
    <property type="project" value="GO_Central"/>
</dbReference>
<dbReference type="GO" id="GO:0000978">
    <property type="term" value="F:RNA polymerase II cis-regulatory region sequence-specific DNA binding"/>
    <property type="evidence" value="ECO:0000318"/>
    <property type="project" value="GO_Central"/>
</dbReference>
<dbReference type="GO" id="GO:0007259">
    <property type="term" value="P:cell surface receptor signaling pathway via JAK-STAT"/>
    <property type="evidence" value="ECO:0000250"/>
    <property type="project" value="AgBase"/>
</dbReference>
<dbReference type="GO" id="GO:0019221">
    <property type="term" value="P:cytokine-mediated signaling pathway"/>
    <property type="evidence" value="ECO:0000250"/>
    <property type="project" value="AgBase"/>
</dbReference>
<dbReference type="GO" id="GO:0006952">
    <property type="term" value="P:defense response"/>
    <property type="evidence" value="ECO:0000318"/>
    <property type="project" value="GO_Central"/>
</dbReference>
<dbReference type="GO" id="GO:0046543">
    <property type="term" value="P:development of secondary female sexual characteristics"/>
    <property type="evidence" value="ECO:0000250"/>
    <property type="project" value="AgBase"/>
</dbReference>
<dbReference type="GO" id="GO:0007565">
    <property type="term" value="P:female pregnancy"/>
    <property type="evidence" value="ECO:0000250"/>
    <property type="project" value="AgBase"/>
</dbReference>
<dbReference type="GO" id="GO:0060397">
    <property type="term" value="P:growth hormone receptor signaling pathway via JAK-STAT"/>
    <property type="evidence" value="ECO:0000318"/>
    <property type="project" value="GO_Central"/>
</dbReference>
<dbReference type="GO" id="GO:0007595">
    <property type="term" value="P:lactation"/>
    <property type="evidence" value="ECO:0000250"/>
    <property type="project" value="AgBase"/>
</dbReference>
<dbReference type="GO" id="GO:0019915">
    <property type="term" value="P:lipid storage"/>
    <property type="evidence" value="ECO:0000250"/>
    <property type="project" value="AgBase"/>
</dbReference>
<dbReference type="GO" id="GO:0001553">
    <property type="term" value="P:luteinization"/>
    <property type="evidence" value="ECO:0000250"/>
    <property type="project" value="AgBase"/>
</dbReference>
<dbReference type="GO" id="GO:0030879">
    <property type="term" value="P:mammary gland development"/>
    <property type="evidence" value="ECO:0000250"/>
    <property type="project" value="AgBase"/>
</dbReference>
<dbReference type="GO" id="GO:0001779">
    <property type="term" value="P:natural killer cell differentiation"/>
    <property type="evidence" value="ECO:0000250"/>
    <property type="project" value="AgBase"/>
</dbReference>
<dbReference type="GO" id="GO:0043066">
    <property type="term" value="P:negative regulation of apoptotic process"/>
    <property type="evidence" value="ECO:0000250"/>
    <property type="project" value="AgBase"/>
</dbReference>
<dbReference type="GO" id="GO:0045647">
    <property type="term" value="P:negative regulation of erythrocyte differentiation"/>
    <property type="evidence" value="ECO:0000250"/>
    <property type="project" value="AgBase"/>
</dbReference>
<dbReference type="GO" id="GO:0042104">
    <property type="term" value="P:positive regulation of activated T cell proliferation"/>
    <property type="evidence" value="ECO:0000250"/>
    <property type="project" value="AgBase"/>
</dbReference>
<dbReference type="GO" id="GO:0045579">
    <property type="term" value="P:positive regulation of B cell differentiation"/>
    <property type="evidence" value="ECO:0000250"/>
    <property type="project" value="AgBase"/>
</dbReference>
<dbReference type="GO" id="GO:0008284">
    <property type="term" value="P:positive regulation of cell population proliferation"/>
    <property type="evidence" value="ECO:0000250"/>
    <property type="project" value="AgBase"/>
</dbReference>
<dbReference type="GO" id="GO:0050729">
    <property type="term" value="P:positive regulation of inflammatory response"/>
    <property type="evidence" value="ECO:0000250"/>
    <property type="project" value="AgBase"/>
</dbReference>
<dbReference type="GO" id="GO:0032743">
    <property type="term" value="P:positive regulation of interleukin-2 production"/>
    <property type="evidence" value="ECO:0000250"/>
    <property type="project" value="AgBase"/>
</dbReference>
<dbReference type="GO" id="GO:0045931">
    <property type="term" value="P:positive regulation of mitotic cell cycle"/>
    <property type="evidence" value="ECO:0000250"/>
    <property type="project" value="AgBase"/>
</dbReference>
<dbReference type="GO" id="GO:0040018">
    <property type="term" value="P:positive regulation of multicellular organism growth"/>
    <property type="evidence" value="ECO:0000250"/>
    <property type="project" value="AgBase"/>
</dbReference>
<dbReference type="GO" id="GO:0045944">
    <property type="term" value="P:positive regulation of transcription by RNA polymerase II"/>
    <property type="evidence" value="ECO:0000250"/>
    <property type="project" value="AgBase"/>
</dbReference>
<dbReference type="GO" id="GO:0030155">
    <property type="term" value="P:regulation of cell adhesion"/>
    <property type="evidence" value="ECO:0000250"/>
    <property type="project" value="AgBase"/>
</dbReference>
<dbReference type="GO" id="GO:0042127">
    <property type="term" value="P:regulation of cell population proliferation"/>
    <property type="evidence" value="ECO:0000318"/>
    <property type="project" value="GO_Central"/>
</dbReference>
<dbReference type="GO" id="GO:0030856">
    <property type="term" value="P:regulation of epithelial cell differentiation"/>
    <property type="evidence" value="ECO:0000250"/>
    <property type="project" value="AgBase"/>
</dbReference>
<dbReference type="GO" id="GO:0019218">
    <property type="term" value="P:regulation of steroid metabolic process"/>
    <property type="evidence" value="ECO:0000250"/>
    <property type="project" value="AgBase"/>
</dbReference>
<dbReference type="GO" id="GO:0006357">
    <property type="term" value="P:regulation of transcription by RNA polymerase II"/>
    <property type="evidence" value="ECO:0000318"/>
    <property type="project" value="GO_Central"/>
</dbReference>
<dbReference type="GO" id="GO:0043434">
    <property type="term" value="P:response to peptide hormone"/>
    <property type="evidence" value="ECO:0000318"/>
    <property type="project" value="GO_Central"/>
</dbReference>
<dbReference type="GO" id="GO:0043029">
    <property type="term" value="P:T cell homeostasis"/>
    <property type="evidence" value="ECO:0000250"/>
    <property type="project" value="AgBase"/>
</dbReference>
<dbReference type="CDD" id="cd16855">
    <property type="entry name" value="STAT5_CCD"/>
    <property type="match status" value="1"/>
</dbReference>
<dbReference type="CDD" id="cd16849">
    <property type="entry name" value="STAT5_DBD"/>
    <property type="match status" value="1"/>
</dbReference>
<dbReference type="FunFam" id="1.10.532.10:FF:000002">
    <property type="entry name" value="Signal transducer and activator of transcription"/>
    <property type="match status" value="1"/>
</dbReference>
<dbReference type="FunFam" id="1.20.1050.20:FF:000002">
    <property type="entry name" value="Signal transducer and activator of transcription"/>
    <property type="match status" value="1"/>
</dbReference>
<dbReference type="FunFam" id="2.60.40.630:FF:000002">
    <property type="entry name" value="Signal transducer and activator of transcription"/>
    <property type="match status" value="1"/>
</dbReference>
<dbReference type="FunFam" id="3.30.505.10:FF:000025">
    <property type="entry name" value="Signal transducer and activator of transcription"/>
    <property type="match status" value="1"/>
</dbReference>
<dbReference type="FunFam" id="1.10.238.10:FF:000029">
    <property type="entry name" value="Signal transducer and transcription activator 6"/>
    <property type="match status" value="1"/>
</dbReference>
<dbReference type="Gene3D" id="1.10.238.10">
    <property type="entry name" value="EF-hand"/>
    <property type="match status" value="1"/>
</dbReference>
<dbReference type="Gene3D" id="3.30.505.10">
    <property type="entry name" value="SH2 domain"/>
    <property type="match status" value="1"/>
</dbReference>
<dbReference type="Gene3D" id="1.20.1050.20">
    <property type="entry name" value="STAT transcription factor, all-alpha domain"/>
    <property type="match status" value="1"/>
</dbReference>
<dbReference type="Gene3D" id="2.60.40.630">
    <property type="entry name" value="STAT transcription factor, DNA-binding domain"/>
    <property type="match status" value="1"/>
</dbReference>
<dbReference type="Gene3D" id="1.10.532.10">
    <property type="entry name" value="STAT transcription factor, N-terminal domain"/>
    <property type="match status" value="1"/>
</dbReference>
<dbReference type="InterPro" id="IPR008967">
    <property type="entry name" value="p53-like_TF_DNA-bd_sf"/>
</dbReference>
<dbReference type="InterPro" id="IPR000980">
    <property type="entry name" value="SH2"/>
</dbReference>
<dbReference type="InterPro" id="IPR036860">
    <property type="entry name" value="SH2_dom_sf"/>
</dbReference>
<dbReference type="InterPro" id="IPR001217">
    <property type="entry name" value="STAT"/>
</dbReference>
<dbReference type="InterPro" id="IPR046994">
    <property type="entry name" value="STAT5_CCD"/>
</dbReference>
<dbReference type="InterPro" id="IPR035858">
    <property type="entry name" value="STAT5a/5b_DBD"/>
</dbReference>
<dbReference type="InterPro" id="IPR048988">
    <property type="entry name" value="STAT_linker"/>
</dbReference>
<dbReference type="InterPro" id="IPR036535">
    <property type="entry name" value="STAT_N_sf"/>
</dbReference>
<dbReference type="InterPro" id="IPR013800">
    <property type="entry name" value="STAT_TF_alpha"/>
</dbReference>
<dbReference type="InterPro" id="IPR015988">
    <property type="entry name" value="STAT_TF_coiled-coil"/>
</dbReference>
<dbReference type="InterPro" id="IPR013801">
    <property type="entry name" value="STAT_TF_DNA-bd"/>
</dbReference>
<dbReference type="InterPro" id="IPR012345">
    <property type="entry name" value="STAT_TF_DNA-bd_N"/>
</dbReference>
<dbReference type="InterPro" id="IPR013799">
    <property type="entry name" value="STAT_TF_prot_interaction"/>
</dbReference>
<dbReference type="PANTHER" id="PTHR11801">
    <property type="entry name" value="SIGNAL TRANSDUCER AND ACTIVATOR OF TRANSCRIPTION"/>
    <property type="match status" value="1"/>
</dbReference>
<dbReference type="Pfam" id="PF00017">
    <property type="entry name" value="SH2"/>
    <property type="match status" value="1"/>
</dbReference>
<dbReference type="Pfam" id="PF01017">
    <property type="entry name" value="STAT_alpha"/>
    <property type="match status" value="1"/>
</dbReference>
<dbReference type="Pfam" id="PF02864">
    <property type="entry name" value="STAT_bind"/>
    <property type="match status" value="1"/>
</dbReference>
<dbReference type="Pfam" id="PF02865">
    <property type="entry name" value="STAT_int"/>
    <property type="match status" value="1"/>
</dbReference>
<dbReference type="Pfam" id="PF21354">
    <property type="entry name" value="STAT_linker"/>
    <property type="match status" value="1"/>
</dbReference>
<dbReference type="SMART" id="SM00252">
    <property type="entry name" value="SH2"/>
    <property type="match status" value="1"/>
</dbReference>
<dbReference type="SMART" id="SM00964">
    <property type="entry name" value="STAT_int"/>
    <property type="match status" value="1"/>
</dbReference>
<dbReference type="SUPFAM" id="SSF49417">
    <property type="entry name" value="p53-like transcription factors"/>
    <property type="match status" value="1"/>
</dbReference>
<dbReference type="SUPFAM" id="SSF55550">
    <property type="entry name" value="SH2 domain"/>
    <property type="match status" value="1"/>
</dbReference>
<dbReference type="SUPFAM" id="SSF47655">
    <property type="entry name" value="STAT"/>
    <property type="match status" value="1"/>
</dbReference>
<dbReference type="SUPFAM" id="SSF48092">
    <property type="entry name" value="Transcription factor STAT-4 N-domain"/>
    <property type="match status" value="1"/>
</dbReference>
<dbReference type="PROSITE" id="PS50001">
    <property type="entry name" value="SH2"/>
    <property type="match status" value="1"/>
</dbReference>
<protein>
    <recommendedName>
        <fullName>Signal transducer and activator of transcription 5A</fullName>
    </recommendedName>
</protein>
<keyword id="KW-0010">Activator</keyword>
<keyword id="KW-0963">Cytoplasm</keyword>
<keyword id="KW-0238">DNA-binding</keyword>
<keyword id="KW-0421">Lactation</keyword>
<keyword id="KW-0539">Nucleus</keyword>
<keyword id="KW-0597">Phosphoprotein</keyword>
<keyword id="KW-1185">Reference proteome</keyword>
<keyword id="KW-0727">SH2 domain</keyword>
<keyword id="KW-0804">Transcription</keyword>
<keyword id="KW-0805">Transcription regulation</keyword>
<keyword id="KW-0832">Ubl conjugation</keyword>
<gene>
    <name type="primary">STAT5A</name>
</gene>
<feature type="chain" id="PRO_0000182425" description="Signal transducer and activator of transcription 5A">
    <location>
        <begin position="1"/>
        <end position="799"/>
    </location>
</feature>
<feature type="domain" description="SH2" evidence="7">
    <location>
        <begin position="589"/>
        <end position="686"/>
    </location>
</feature>
<feature type="region of interest" description="Disordered" evidence="8">
    <location>
        <begin position="778"/>
        <end position="799"/>
    </location>
</feature>
<feature type="modified residue" description="Phosphotyrosine" evidence="3">
    <location>
        <position position="90"/>
    </location>
</feature>
<feature type="modified residue" description="Phosphoserine" evidence="3">
    <location>
        <position position="128"/>
    </location>
</feature>
<feature type="modified residue" description="Phosphotyrosine" evidence="3">
    <location>
        <position position="682"/>
    </location>
</feature>
<feature type="modified residue" description="Phosphotyrosine; by JAK2" evidence="5">
    <location>
        <position position="699"/>
    </location>
</feature>
<feature type="modified residue" description="Phosphoserine" evidence="3">
    <location>
        <position position="785"/>
    </location>
</feature>
<feature type="sequence variant">
    <original>C</original>
    <variation>R</variation>
    <location>
        <position position="197"/>
    </location>
</feature>
<feature type="sequence variant">
    <original>F</original>
    <variation>S</variation>
    <location>
        <position position="457"/>
    </location>
</feature>
<feature type="sequence variant">
    <original>F</original>
    <variation>L</variation>
    <location>
        <position position="711"/>
    </location>
</feature>
<feature type="sequence variant">
    <original>T</original>
    <variation>I</variation>
    <location>
        <position position="794"/>
    </location>
</feature>
<sequence length="799" mass="90954">MAGWIQAQQLQGDALRQMQVLYGQHFPIEVRHYLAQWIESQPWDAIDVDNPQDRAQATQLLENLVQELQKKAEHQVGEDGFLLKIKLGHYATQLQNTYDRCPMELVRCIRHILYNEQRLVREANNGSSSAGILVDAMSQKHLQINQTFEELRLVTQDTENELKKLQQTQEYFIIQYQESLRIQAQFAQLAQLNPQECLSRETALQQKQVTLEAWLQREAQTLQQYRVELAEKHQKTLQLLRKQQTIILDDELIQWKRRQQLAGNGGPPEGSLDVLQSWCEKLAEIIWQNRQQIRRAEHLCQQLPIPGPVEEMLAEVNATITDIISALVTSTFIIEKQPPQVLKTQTKFAATVRLLVGGKLNVHMNPPQVKATIISEQQAKSLLKNESTRNECSGEILNNCCVMEYHQATGTLSAHFRNMSLKRIKRADRRGAESVTEEKFTVLFESQFSVGSNELVFQVKTLSLPVVVIVHGSQDHNATATVLWDNAFAEPGRVPFAVPDKVLWPQLCEALNMKFKAEVQSNRGLTKENLVFLAQKLFNSSSSHLEDYSGMSVSWSQFNRENLPGWNYTFWQWFDGVMEVLKKHHKPHWNDGAILGFVNKQQAHDLLINKPDGTFLLRFSDSEIGGITIAWKFDSPDRNLWNLKPFTTRDFSIRSLADRLGDLSYLIYVFPDRPKDEVFSKYYTPVLAPASAAKAVDGYVKPQIKQVVPEFVSASSDSAGGNATYMDQAPSPAVCPQAHYSIYPQNPDPVLDQDGEFDLDETMDVARHVEELLRRPMDSLDPRLSPPAGLFASTRGSLS</sequence>
<organism>
    <name type="scientific">Sus scrofa</name>
    <name type="common">Pig</name>
    <dbReference type="NCBI Taxonomy" id="9823"/>
    <lineage>
        <taxon>Eukaryota</taxon>
        <taxon>Metazoa</taxon>
        <taxon>Chordata</taxon>
        <taxon>Craniata</taxon>
        <taxon>Vertebrata</taxon>
        <taxon>Euteleostomi</taxon>
        <taxon>Mammalia</taxon>
        <taxon>Eutheria</taxon>
        <taxon>Laurasiatheria</taxon>
        <taxon>Artiodactyla</taxon>
        <taxon>Suina</taxon>
        <taxon>Suidae</taxon>
        <taxon>Sus</taxon>
    </lineage>
</organism>
<reference key="1">
    <citation type="submission" date="1999-03" db="EMBL/GenBank/DDBJ databases">
        <authorList>
            <person name="Palin M.-F."/>
            <person name="Beaudry D."/>
            <person name="Roberge C."/>
            <person name="Farmer C."/>
        </authorList>
    </citation>
    <scope>NUCLEOTIDE SEQUENCE [MRNA]</scope>
    <source>
        <strain>Large white</strain>
        <tissue>Mammary gland</tissue>
    </source>
</reference>
<evidence type="ECO:0000250" key="1"/>
<evidence type="ECO:0000250" key="2">
    <source>
        <dbReference type="UniProtKB" id="P40763"/>
    </source>
</evidence>
<evidence type="ECO:0000250" key="3">
    <source>
        <dbReference type="UniProtKB" id="P42229"/>
    </source>
</evidence>
<evidence type="ECO:0000250" key="4">
    <source>
        <dbReference type="UniProtKB" id="P42230"/>
    </source>
</evidence>
<evidence type="ECO:0000250" key="5">
    <source>
        <dbReference type="UniProtKB" id="P51692"/>
    </source>
</evidence>
<evidence type="ECO:0000250" key="6">
    <source>
        <dbReference type="UniProtKB" id="Q62771"/>
    </source>
</evidence>
<evidence type="ECO:0000255" key="7">
    <source>
        <dbReference type="PROSITE-ProRule" id="PRU00191"/>
    </source>
</evidence>
<evidence type="ECO:0000256" key="8">
    <source>
        <dbReference type="SAM" id="MobiDB-lite"/>
    </source>
</evidence>
<evidence type="ECO:0000305" key="9"/>
<accession>Q9TUZ1</accession>